<accession>Q978U9</accession>
<proteinExistence type="inferred from homology"/>
<gene>
    <name evidence="1" type="primary">hemH</name>
    <name type="ordered locus">TV1316</name>
    <name type="ORF">TVG1357926</name>
</gene>
<feature type="chain" id="PRO_0000175238" description="Ferrochelatase">
    <location>
        <begin position="1"/>
        <end position="304"/>
    </location>
</feature>
<feature type="binding site" evidence="1">
    <location>
        <position position="169"/>
    </location>
    <ligand>
        <name>Fe cation</name>
        <dbReference type="ChEBI" id="CHEBI:24875"/>
    </ligand>
</feature>
<feature type="binding site" evidence="1">
    <location>
        <position position="241"/>
    </location>
    <ligand>
        <name>Fe cation</name>
        <dbReference type="ChEBI" id="CHEBI:24875"/>
    </ligand>
</feature>
<keyword id="KW-0963">Cytoplasm</keyword>
<keyword id="KW-0350">Heme biosynthesis</keyword>
<keyword id="KW-0408">Iron</keyword>
<keyword id="KW-0456">Lyase</keyword>
<keyword id="KW-0479">Metal-binding</keyword>
<keyword id="KW-0627">Porphyrin biosynthesis</keyword>
<comment type="function">
    <text evidence="1">Catalyzes the ferrous insertion into protoporphyrin IX.</text>
</comment>
<comment type="catalytic activity">
    <reaction evidence="1">
        <text>heme b + 2 H(+) = protoporphyrin IX + Fe(2+)</text>
        <dbReference type="Rhea" id="RHEA:22584"/>
        <dbReference type="ChEBI" id="CHEBI:15378"/>
        <dbReference type="ChEBI" id="CHEBI:29033"/>
        <dbReference type="ChEBI" id="CHEBI:57306"/>
        <dbReference type="ChEBI" id="CHEBI:60344"/>
        <dbReference type="EC" id="4.98.1.1"/>
    </reaction>
</comment>
<comment type="pathway">
    <text evidence="1">Porphyrin-containing compound metabolism; protoheme biosynthesis; protoheme from protoporphyrin-IX: step 1/1.</text>
</comment>
<comment type="subcellular location">
    <subcellularLocation>
        <location evidence="1">Cytoplasm</location>
    </subcellularLocation>
</comment>
<comment type="similarity">
    <text evidence="1">Belongs to the ferrochelatase family.</text>
</comment>
<dbReference type="EC" id="4.98.1.1" evidence="1"/>
<dbReference type="EMBL" id="BA000011">
    <property type="protein sequence ID" value="BAB60458.1"/>
    <property type="molecule type" value="Genomic_DNA"/>
</dbReference>
<dbReference type="RefSeq" id="WP_010917551.1">
    <property type="nucleotide sequence ID" value="NC_002689.2"/>
</dbReference>
<dbReference type="SMR" id="Q978U9"/>
<dbReference type="STRING" id="273116.gene:9382124"/>
<dbReference type="PaxDb" id="273116-14325555"/>
<dbReference type="GeneID" id="1441433"/>
<dbReference type="KEGG" id="tvo:TVG1357926"/>
<dbReference type="eggNOG" id="arCOG05373">
    <property type="taxonomic scope" value="Archaea"/>
</dbReference>
<dbReference type="HOGENOM" id="CLU_018884_2_1_2"/>
<dbReference type="OrthoDB" id="56534at2157"/>
<dbReference type="PhylomeDB" id="Q978U9"/>
<dbReference type="UniPathway" id="UPA00252">
    <property type="reaction ID" value="UER00325"/>
</dbReference>
<dbReference type="Proteomes" id="UP000001017">
    <property type="component" value="Chromosome"/>
</dbReference>
<dbReference type="GO" id="GO:0005737">
    <property type="term" value="C:cytoplasm"/>
    <property type="evidence" value="ECO:0007669"/>
    <property type="project" value="UniProtKB-SubCell"/>
</dbReference>
<dbReference type="GO" id="GO:0004325">
    <property type="term" value="F:ferrochelatase activity"/>
    <property type="evidence" value="ECO:0007669"/>
    <property type="project" value="UniProtKB-UniRule"/>
</dbReference>
<dbReference type="GO" id="GO:0046872">
    <property type="term" value="F:metal ion binding"/>
    <property type="evidence" value="ECO:0007669"/>
    <property type="project" value="UniProtKB-KW"/>
</dbReference>
<dbReference type="GO" id="GO:0006783">
    <property type="term" value="P:heme biosynthetic process"/>
    <property type="evidence" value="ECO:0007669"/>
    <property type="project" value="UniProtKB-UniRule"/>
</dbReference>
<dbReference type="CDD" id="cd00419">
    <property type="entry name" value="Ferrochelatase_C"/>
    <property type="match status" value="1"/>
</dbReference>
<dbReference type="CDD" id="cd03411">
    <property type="entry name" value="Ferrochelatase_N"/>
    <property type="match status" value="1"/>
</dbReference>
<dbReference type="Gene3D" id="3.40.50.1400">
    <property type="match status" value="2"/>
</dbReference>
<dbReference type="HAMAP" id="MF_00323">
    <property type="entry name" value="Ferrochelatase"/>
    <property type="match status" value="1"/>
</dbReference>
<dbReference type="InterPro" id="IPR001015">
    <property type="entry name" value="Ferrochelatase"/>
</dbReference>
<dbReference type="InterPro" id="IPR033644">
    <property type="entry name" value="Ferrochelatase_C"/>
</dbReference>
<dbReference type="InterPro" id="IPR033659">
    <property type="entry name" value="Ferrochelatase_N"/>
</dbReference>
<dbReference type="NCBIfam" id="TIGR00109">
    <property type="entry name" value="hemH"/>
    <property type="match status" value="1"/>
</dbReference>
<dbReference type="PANTHER" id="PTHR11108">
    <property type="entry name" value="FERROCHELATASE"/>
    <property type="match status" value="1"/>
</dbReference>
<dbReference type="PANTHER" id="PTHR11108:SF1">
    <property type="entry name" value="FERROCHELATASE, MITOCHONDRIAL"/>
    <property type="match status" value="1"/>
</dbReference>
<dbReference type="Pfam" id="PF00762">
    <property type="entry name" value="Ferrochelatase"/>
    <property type="match status" value="1"/>
</dbReference>
<dbReference type="SUPFAM" id="SSF53800">
    <property type="entry name" value="Chelatase"/>
    <property type="match status" value="1"/>
</dbReference>
<evidence type="ECO:0000255" key="1">
    <source>
        <dbReference type="HAMAP-Rule" id="MF_00323"/>
    </source>
</evidence>
<name>HEMH_THEVO</name>
<reference key="1">
    <citation type="journal article" date="2000" name="Proc. Natl. Acad. Sci. U.S.A.">
        <title>Archaeal adaptation to higher temperatures revealed by genomic sequence of Thermoplasma volcanium.</title>
        <authorList>
            <person name="Kawashima T."/>
            <person name="Amano N."/>
            <person name="Koike H."/>
            <person name="Makino S."/>
            <person name="Higuchi S."/>
            <person name="Kawashima-Ohya Y."/>
            <person name="Watanabe K."/>
            <person name="Yamazaki M."/>
            <person name="Kanehori K."/>
            <person name="Kawamoto T."/>
            <person name="Nunoshiba T."/>
            <person name="Yamamoto Y."/>
            <person name="Aramaki H."/>
            <person name="Makino K."/>
            <person name="Suzuki M."/>
        </authorList>
    </citation>
    <scope>NUCLEOTIDE SEQUENCE [LARGE SCALE GENOMIC DNA]</scope>
    <source>
        <strain>ATCC 51530 / DSM 4299 / JCM 9571 / NBRC 15438 / GSS1</strain>
    </source>
</reference>
<sequence length="304" mass="35231">MKTAVLLLSYGSPEKMSDIDEYLSKIFGGKPVPKGVAEENYRKYEMFGGLSPSNRIIQSIRDRLQKRFDQSGDVDVFTAFKHWYPSIGEVVPDLKGYDNIVSIPLFSFFSENVKASYYKPLAEALEKNDIRTKMEFVNGISNYDLFIPMWIHLIEEKEKGDSFYLFDAHSLPHPENEEDYLFWLRYSTYKITQIMGLRSSDFGFQGGHEGWLGPSIYNVYRKAKEKKIIAVPISFLYDHLEILYDLDYEFRKKIEEDGYSYERVPMPNDSAIFITLLERIVSSSITHLSGELIGNGKEKSENFI</sequence>
<protein>
    <recommendedName>
        <fullName evidence="1">Ferrochelatase</fullName>
        <ecNumber evidence="1">4.98.1.1</ecNumber>
    </recommendedName>
    <alternativeName>
        <fullName evidence="1">Heme synthase</fullName>
    </alternativeName>
    <alternativeName>
        <fullName evidence="1">Protoheme ferro-lyase</fullName>
    </alternativeName>
</protein>
<organism>
    <name type="scientific">Thermoplasma volcanium (strain ATCC 51530 / DSM 4299 / JCM 9571 / NBRC 15438 / GSS1)</name>
    <dbReference type="NCBI Taxonomy" id="273116"/>
    <lineage>
        <taxon>Archaea</taxon>
        <taxon>Methanobacteriati</taxon>
        <taxon>Thermoplasmatota</taxon>
        <taxon>Thermoplasmata</taxon>
        <taxon>Thermoplasmatales</taxon>
        <taxon>Thermoplasmataceae</taxon>
        <taxon>Thermoplasma</taxon>
    </lineage>
</organism>